<reference key="1">
    <citation type="journal article" date="2000" name="Nature">
        <title>Sequence and analysis of chromosome 1 of the plant Arabidopsis thaliana.</title>
        <authorList>
            <person name="Theologis A."/>
            <person name="Ecker J.R."/>
            <person name="Palm C.J."/>
            <person name="Federspiel N.A."/>
            <person name="Kaul S."/>
            <person name="White O."/>
            <person name="Alonso J."/>
            <person name="Altafi H."/>
            <person name="Araujo R."/>
            <person name="Bowman C.L."/>
            <person name="Brooks S.Y."/>
            <person name="Buehler E."/>
            <person name="Chan A."/>
            <person name="Chao Q."/>
            <person name="Chen H."/>
            <person name="Cheuk R.F."/>
            <person name="Chin C.W."/>
            <person name="Chung M.K."/>
            <person name="Conn L."/>
            <person name="Conway A.B."/>
            <person name="Conway A.R."/>
            <person name="Creasy T.H."/>
            <person name="Dewar K."/>
            <person name="Dunn P."/>
            <person name="Etgu P."/>
            <person name="Feldblyum T.V."/>
            <person name="Feng J.-D."/>
            <person name="Fong B."/>
            <person name="Fujii C.Y."/>
            <person name="Gill J.E."/>
            <person name="Goldsmith A.D."/>
            <person name="Haas B."/>
            <person name="Hansen N.F."/>
            <person name="Hughes B."/>
            <person name="Huizar L."/>
            <person name="Hunter J.L."/>
            <person name="Jenkins J."/>
            <person name="Johnson-Hopson C."/>
            <person name="Khan S."/>
            <person name="Khaykin E."/>
            <person name="Kim C.J."/>
            <person name="Koo H.L."/>
            <person name="Kremenetskaia I."/>
            <person name="Kurtz D.B."/>
            <person name="Kwan A."/>
            <person name="Lam B."/>
            <person name="Langin-Hooper S."/>
            <person name="Lee A."/>
            <person name="Lee J.M."/>
            <person name="Lenz C.A."/>
            <person name="Li J.H."/>
            <person name="Li Y.-P."/>
            <person name="Lin X."/>
            <person name="Liu S.X."/>
            <person name="Liu Z.A."/>
            <person name="Luros J.S."/>
            <person name="Maiti R."/>
            <person name="Marziali A."/>
            <person name="Militscher J."/>
            <person name="Miranda M."/>
            <person name="Nguyen M."/>
            <person name="Nierman W.C."/>
            <person name="Osborne B.I."/>
            <person name="Pai G."/>
            <person name="Peterson J."/>
            <person name="Pham P.K."/>
            <person name="Rizzo M."/>
            <person name="Rooney T."/>
            <person name="Rowley D."/>
            <person name="Sakano H."/>
            <person name="Salzberg S.L."/>
            <person name="Schwartz J.R."/>
            <person name="Shinn P."/>
            <person name="Southwick A.M."/>
            <person name="Sun H."/>
            <person name="Tallon L.J."/>
            <person name="Tambunga G."/>
            <person name="Toriumi M.J."/>
            <person name="Town C.D."/>
            <person name="Utterback T."/>
            <person name="Van Aken S."/>
            <person name="Vaysberg M."/>
            <person name="Vysotskaia V.S."/>
            <person name="Walker M."/>
            <person name="Wu D."/>
            <person name="Yu G."/>
            <person name="Fraser C.M."/>
            <person name="Venter J.C."/>
            <person name="Davis R.W."/>
        </authorList>
    </citation>
    <scope>NUCLEOTIDE SEQUENCE [LARGE SCALE GENOMIC DNA]</scope>
    <source>
        <strain>cv. Columbia</strain>
    </source>
</reference>
<reference key="2">
    <citation type="journal article" date="2017" name="Plant J.">
        <title>Araport11: a complete reannotation of the Arabidopsis thaliana reference genome.</title>
        <authorList>
            <person name="Cheng C.Y."/>
            <person name="Krishnakumar V."/>
            <person name="Chan A.P."/>
            <person name="Thibaud-Nissen F."/>
            <person name="Schobel S."/>
            <person name="Town C.D."/>
        </authorList>
    </citation>
    <scope>GENOME REANNOTATION</scope>
    <source>
        <strain>cv. Columbia</strain>
    </source>
</reference>
<sequence>MTTLKTSSFSSLPWDLVEDILARVPATSLKRLRSTCKQWNFLFNDQIFTKMHFDKAEKQFLVLILRLYTVCSMSLDLRGLHDNIDPSIEVKGELSLIDPHCSSRKTFVSKVFHCNGLLLCTTMTGLVVWNPCTDQTRWIKTEVPHNRNDKYALGYGNYKSCYNYKIMKFLDLESFDLEIYEVNSNSWRVLGTVTPDFTIPLDAEGVSLRGNSYWIASHKREEIEEEEEEENEYFINDFLISFDFTTERFGPRVSLPFKCESSWDTISLSCVREERLSLFFQDDGTLKMEIWMTNNITETKTTTMSWSPFLKIDLYTYGHRFGNEVSFLVDEENKVIVCCDEEEDDINDTVYIIGENEYWRKEDIVQRSYRPRMFSYVPSLVQI</sequence>
<accession>O04591</accession>
<proteinExistence type="predicted"/>
<dbReference type="EMBL" id="AC000375">
    <property type="protein sequence ID" value="AAB60771.1"/>
    <property type="status" value="ALT_SEQ"/>
    <property type="molecule type" value="Genomic_DNA"/>
</dbReference>
<dbReference type="EMBL" id="CP002684">
    <property type="protein sequence ID" value="AEE33944.1"/>
    <property type="molecule type" value="Genomic_DNA"/>
</dbReference>
<dbReference type="PIR" id="C96649">
    <property type="entry name" value="C96649"/>
</dbReference>
<dbReference type="RefSeq" id="NP_176417.1">
    <property type="nucleotide sequence ID" value="NM_104907.1"/>
</dbReference>
<dbReference type="FunCoup" id="O04591">
    <property type="interactions" value="11"/>
</dbReference>
<dbReference type="STRING" id="3702.O04591"/>
<dbReference type="PaxDb" id="3702-AT1G62270.1"/>
<dbReference type="EnsemblPlants" id="AT1G62270.1">
    <property type="protein sequence ID" value="AT1G62270.1"/>
    <property type="gene ID" value="AT1G62270"/>
</dbReference>
<dbReference type="GeneID" id="842524"/>
<dbReference type="Gramene" id="AT1G62270.1">
    <property type="protein sequence ID" value="AT1G62270.1"/>
    <property type="gene ID" value="AT1G62270"/>
</dbReference>
<dbReference type="KEGG" id="ath:AT1G62270"/>
<dbReference type="Araport" id="AT1G62270"/>
<dbReference type="TAIR" id="AT1G62270"/>
<dbReference type="HOGENOM" id="CLU_034692_0_0_1"/>
<dbReference type="InParanoid" id="O04591"/>
<dbReference type="OMA" id="TIEIWIS"/>
<dbReference type="OrthoDB" id="1044327at2759"/>
<dbReference type="PhylomeDB" id="O04591"/>
<dbReference type="PRO" id="PR:O04591"/>
<dbReference type="Proteomes" id="UP000006548">
    <property type="component" value="Chromosome 1"/>
</dbReference>
<dbReference type="ExpressionAtlas" id="O04591">
    <property type="expression patterns" value="baseline"/>
</dbReference>
<dbReference type="CDD" id="cd22157">
    <property type="entry name" value="F-box_AtFBW1-like"/>
    <property type="match status" value="1"/>
</dbReference>
<dbReference type="Gene3D" id="1.20.1280.50">
    <property type="match status" value="1"/>
</dbReference>
<dbReference type="InterPro" id="IPR006527">
    <property type="entry name" value="F-box-assoc_dom_typ1"/>
</dbReference>
<dbReference type="InterPro" id="IPR017451">
    <property type="entry name" value="F-box-assoc_interact_dom"/>
</dbReference>
<dbReference type="InterPro" id="IPR036047">
    <property type="entry name" value="F-box-like_dom_sf"/>
</dbReference>
<dbReference type="InterPro" id="IPR001810">
    <property type="entry name" value="F-box_dom"/>
</dbReference>
<dbReference type="InterPro" id="IPR050796">
    <property type="entry name" value="SCF_F-box_component"/>
</dbReference>
<dbReference type="NCBIfam" id="TIGR01640">
    <property type="entry name" value="F_box_assoc_1"/>
    <property type="match status" value="1"/>
</dbReference>
<dbReference type="PANTHER" id="PTHR31672">
    <property type="entry name" value="BNACNNG10540D PROTEIN"/>
    <property type="match status" value="1"/>
</dbReference>
<dbReference type="PANTHER" id="PTHR31672:SF13">
    <property type="entry name" value="F-BOX PROTEIN CPR30-LIKE"/>
    <property type="match status" value="1"/>
</dbReference>
<dbReference type="Pfam" id="PF00646">
    <property type="entry name" value="F-box"/>
    <property type="match status" value="1"/>
</dbReference>
<dbReference type="Pfam" id="PF07734">
    <property type="entry name" value="FBA_1"/>
    <property type="match status" value="1"/>
</dbReference>
<dbReference type="SMART" id="SM00256">
    <property type="entry name" value="FBOX"/>
    <property type="match status" value="1"/>
</dbReference>
<dbReference type="SUPFAM" id="SSF81383">
    <property type="entry name" value="F-box domain"/>
    <property type="match status" value="1"/>
</dbReference>
<dbReference type="PROSITE" id="PS50181">
    <property type="entry name" value="FBOX"/>
    <property type="match status" value="1"/>
</dbReference>
<organism>
    <name type="scientific">Arabidopsis thaliana</name>
    <name type="common">Mouse-ear cress</name>
    <dbReference type="NCBI Taxonomy" id="3702"/>
    <lineage>
        <taxon>Eukaryota</taxon>
        <taxon>Viridiplantae</taxon>
        <taxon>Streptophyta</taxon>
        <taxon>Embryophyta</taxon>
        <taxon>Tracheophyta</taxon>
        <taxon>Spermatophyta</taxon>
        <taxon>Magnoliopsida</taxon>
        <taxon>eudicotyledons</taxon>
        <taxon>Gunneridae</taxon>
        <taxon>Pentapetalae</taxon>
        <taxon>rosids</taxon>
        <taxon>malvids</taxon>
        <taxon>Brassicales</taxon>
        <taxon>Brassicaceae</taxon>
        <taxon>Camelineae</taxon>
        <taxon>Arabidopsis</taxon>
    </lineage>
</organism>
<feature type="chain" id="PRO_0000283186" description="Putative F-box/kelch-repeat protein At1g62270">
    <location>
        <begin position="1"/>
        <end position="383"/>
    </location>
</feature>
<feature type="domain" description="F-box" evidence="1">
    <location>
        <begin position="6"/>
        <end position="51"/>
    </location>
</feature>
<feature type="repeat" description="Kelch 1">
    <location>
        <begin position="110"/>
        <end position="158"/>
    </location>
</feature>
<feature type="repeat" description="Kelch 2">
    <location>
        <begin position="160"/>
        <end position="211"/>
    </location>
</feature>
<feature type="repeat" description="Kelch 3">
    <location>
        <begin position="349"/>
        <end position="383"/>
    </location>
</feature>
<protein>
    <recommendedName>
        <fullName>Putative F-box/kelch-repeat protein At1g62270</fullName>
    </recommendedName>
</protein>
<name>FBK26_ARATH</name>
<keyword id="KW-0880">Kelch repeat</keyword>
<keyword id="KW-1185">Reference proteome</keyword>
<keyword id="KW-0677">Repeat</keyword>
<gene>
    <name type="ordered locus">At1g62270</name>
    <name type="ORF">F19K23.19</name>
</gene>
<evidence type="ECO:0000255" key="1">
    <source>
        <dbReference type="PROSITE-ProRule" id="PRU00080"/>
    </source>
</evidence>
<evidence type="ECO:0000305" key="2"/>
<comment type="sequence caution" evidence="2">
    <conflict type="erroneous gene model prediction">
        <sequence resource="EMBL-CDS" id="AAB60771"/>
    </conflict>
</comment>